<name>IER1_SOLLC</name>
<sequence length="119" mass="13160">MEANKSMVKLVAFLIILVSSCFQSLTAQDLEIEVSDGLNVLQVHDVSQSFCPGVTKESWPELLGTPAKFAKQIIQKENPKLTNVETLLNGSAFTEDLRCNRVRLFVNLLDIVVQTPKVG</sequence>
<accession>P20076</accession>
<protein>
    <recommendedName>
        <fullName>Ethylene-responsive proteinase inhibitor 1</fullName>
    </recommendedName>
    <alternativeName>
        <fullName>Ethylene-responsive proteinase inhibitor I</fullName>
    </alternativeName>
</protein>
<keyword id="KW-0646">Protease inhibitor</keyword>
<keyword id="KW-1185">Reference proteome</keyword>
<keyword id="KW-0964">Secreted</keyword>
<keyword id="KW-0722">Serine protease inhibitor</keyword>
<keyword id="KW-0732">Signal</keyword>
<comment type="subcellular location">
    <subcellularLocation>
        <location evidence="2">Secreted</location>
    </subcellularLocation>
</comment>
<comment type="similarity">
    <text evidence="2">Belongs to the protease inhibitor I13 (potato type I serine protease inhibitor) family.</text>
</comment>
<reference key="1">
    <citation type="journal article" date="1988" name="Proc. Natl. Acad. Sci. U.S.A.">
        <title>Ethylene-regulated expression of a tomato fruit ripening gene encoding a proteinase inhibitor I with a glutamic residue at the reactive site.</title>
        <authorList>
            <person name="Margossian L.J."/>
            <person name="Federman A.D."/>
            <person name="Giovannoni J.J."/>
            <person name="Fischer R.L."/>
        </authorList>
    </citation>
    <scope>NUCLEOTIDE SEQUENCE [MRNA]</scope>
</reference>
<evidence type="ECO:0000250" key="1"/>
<evidence type="ECO:0000305" key="2"/>
<proteinExistence type="inferred from homology"/>
<dbReference type="EMBL" id="J04099">
    <property type="protein sequence ID" value="AAA60745.1"/>
    <property type="molecule type" value="mRNA"/>
</dbReference>
<dbReference type="PIR" id="A32067">
    <property type="entry name" value="A32067"/>
</dbReference>
<dbReference type="RefSeq" id="NP_001234615.1">
    <property type="nucleotide sequence ID" value="NM_001247686.2"/>
</dbReference>
<dbReference type="SMR" id="P20076"/>
<dbReference type="FunCoup" id="P20076">
    <property type="interactions" value="25"/>
</dbReference>
<dbReference type="STRING" id="4081.P20076"/>
<dbReference type="PaxDb" id="4081-Solyc08g080630.2.1"/>
<dbReference type="GeneID" id="543953"/>
<dbReference type="KEGG" id="sly:543953"/>
<dbReference type="eggNOG" id="ENOG502R80H">
    <property type="taxonomic scope" value="Eukaryota"/>
</dbReference>
<dbReference type="HOGENOM" id="CLU_158942_4_1_1"/>
<dbReference type="InParanoid" id="P20076"/>
<dbReference type="OrthoDB" id="10013825at2759"/>
<dbReference type="PhylomeDB" id="P20076"/>
<dbReference type="Proteomes" id="UP000004994">
    <property type="component" value="Unplaced"/>
</dbReference>
<dbReference type="GO" id="GO:0005576">
    <property type="term" value="C:extracellular region"/>
    <property type="evidence" value="ECO:0007669"/>
    <property type="project" value="UniProtKB-SubCell"/>
</dbReference>
<dbReference type="GO" id="GO:0004867">
    <property type="term" value="F:serine-type endopeptidase inhibitor activity"/>
    <property type="evidence" value="ECO:0007669"/>
    <property type="project" value="UniProtKB-KW"/>
</dbReference>
<dbReference type="GO" id="GO:0009611">
    <property type="term" value="P:response to wounding"/>
    <property type="evidence" value="ECO:0007669"/>
    <property type="project" value="InterPro"/>
</dbReference>
<dbReference type="Gene3D" id="3.30.10.10">
    <property type="entry name" value="Trypsin Inhibitor V, subunit A"/>
    <property type="match status" value="1"/>
</dbReference>
<dbReference type="InterPro" id="IPR000864">
    <property type="entry name" value="Prot_inh_pot1"/>
</dbReference>
<dbReference type="InterPro" id="IPR036354">
    <property type="entry name" value="Prot_inh_pot1_sf"/>
</dbReference>
<dbReference type="PANTHER" id="PTHR33091:SF84">
    <property type="entry name" value="ETHYLENE-RESPONSIVE PROTEINASE INHIBITOR 1"/>
    <property type="match status" value="1"/>
</dbReference>
<dbReference type="PANTHER" id="PTHR33091">
    <property type="entry name" value="PROTEIN, PUTATIVE, EXPRESSED-RELATED"/>
    <property type="match status" value="1"/>
</dbReference>
<dbReference type="Pfam" id="PF00280">
    <property type="entry name" value="potato_inhibit"/>
    <property type="match status" value="1"/>
</dbReference>
<dbReference type="PRINTS" id="PR00292">
    <property type="entry name" value="POTATOINHBTR"/>
</dbReference>
<dbReference type="SUPFAM" id="SSF54654">
    <property type="entry name" value="CI-2 family of serine protease inhibitors"/>
    <property type="match status" value="1"/>
</dbReference>
<dbReference type="PROSITE" id="PS00285">
    <property type="entry name" value="POTATO_INHIBITOR"/>
    <property type="match status" value="1"/>
</dbReference>
<feature type="signal peptide">
    <location>
        <begin position="1"/>
        <end position="27"/>
    </location>
</feature>
<feature type="propeptide" id="PRO_0000025302">
    <location>
        <begin position="28"/>
        <end position="48"/>
    </location>
</feature>
<feature type="chain" id="PRO_0000025303" description="Ethylene-responsive proteinase inhibitor 1">
    <location>
        <begin position="49"/>
        <end position="119"/>
    </location>
</feature>
<feature type="site" description="Reactive bond" evidence="1">
    <location>
        <begin position="95"/>
        <end position="96"/>
    </location>
</feature>
<organism>
    <name type="scientific">Solanum lycopersicum</name>
    <name type="common">Tomato</name>
    <name type="synonym">Lycopersicon esculentum</name>
    <dbReference type="NCBI Taxonomy" id="4081"/>
    <lineage>
        <taxon>Eukaryota</taxon>
        <taxon>Viridiplantae</taxon>
        <taxon>Streptophyta</taxon>
        <taxon>Embryophyta</taxon>
        <taxon>Tracheophyta</taxon>
        <taxon>Spermatophyta</taxon>
        <taxon>Magnoliopsida</taxon>
        <taxon>eudicotyledons</taxon>
        <taxon>Gunneridae</taxon>
        <taxon>Pentapetalae</taxon>
        <taxon>asterids</taxon>
        <taxon>lamiids</taxon>
        <taxon>Solanales</taxon>
        <taxon>Solanaceae</taxon>
        <taxon>Solanoideae</taxon>
        <taxon>Solaneae</taxon>
        <taxon>Solanum</taxon>
        <taxon>Solanum subgen. Lycopersicon</taxon>
    </lineage>
</organism>